<gene>
    <name type="primary">rps7-A</name>
</gene>
<gene>
    <name type="primary">rps7-B</name>
</gene>
<proteinExistence type="inferred from homology"/>
<geneLocation type="chloroplast"/>
<sequence length="155" mass="17556">MSRRGTAEEKTAKSDPIYRNRLVNMLINRILKHGKKSLAYQILYRAMKKIQQKTETNPLSVLRQAIRRVTPDIAVKARRASGSTHPVPIEIGSTQGRALAIRWLLGASRKRPGRNMAFKLSSELVDATKGRGGAIRKREETHRMAEANRAFAHFR</sequence>
<accession>B0Z589</accession>
<keyword id="KW-0150">Chloroplast</keyword>
<keyword id="KW-0934">Plastid</keyword>
<keyword id="KW-0687">Ribonucleoprotein</keyword>
<keyword id="KW-0689">Ribosomal protein</keyword>
<keyword id="KW-0694">RNA-binding</keyword>
<keyword id="KW-0699">rRNA-binding</keyword>
<reference key="1">
    <citation type="journal article" date="2008" name="Nucleic Acids Res.">
        <title>The complete nucleotide sequences of the five genetically distinct plastid genomes of Oenothera, subsection Oenothera: I. Sequence evaluation and plastome evolution.</title>
        <authorList>
            <person name="Greiner S."/>
            <person name="Wang X."/>
            <person name="Rauwolf U."/>
            <person name="Silber M.V."/>
            <person name="Mayer K."/>
            <person name="Meurer J."/>
            <person name="Haberer G."/>
            <person name="Herrmann R.G."/>
        </authorList>
    </citation>
    <scope>NUCLEOTIDE SEQUENCE [LARGE SCALE GENOMIC DNA]</scope>
    <source>
        <strain>cv. Rr-lamarckiana Sweden</strain>
    </source>
</reference>
<organism>
    <name type="scientific">Oenothera glazioviana</name>
    <name type="common">Large-flowered evening primrose</name>
    <name type="synonym">Oenothera erythrosepala</name>
    <dbReference type="NCBI Taxonomy" id="482428"/>
    <lineage>
        <taxon>Eukaryota</taxon>
        <taxon>Viridiplantae</taxon>
        <taxon>Streptophyta</taxon>
        <taxon>Embryophyta</taxon>
        <taxon>Tracheophyta</taxon>
        <taxon>Spermatophyta</taxon>
        <taxon>Magnoliopsida</taxon>
        <taxon>eudicotyledons</taxon>
        <taxon>Gunneridae</taxon>
        <taxon>Pentapetalae</taxon>
        <taxon>rosids</taxon>
        <taxon>malvids</taxon>
        <taxon>Myrtales</taxon>
        <taxon>Onagraceae</taxon>
        <taxon>Onagroideae</taxon>
        <taxon>Onagreae</taxon>
        <taxon>Oenothera</taxon>
    </lineage>
</organism>
<comment type="function">
    <text evidence="1">One of the primary rRNA binding proteins, it binds directly to 16S rRNA where it nucleates assembly of the head domain of the 30S subunit.</text>
</comment>
<comment type="subunit">
    <text evidence="1">Part of the 30S ribosomal subunit.</text>
</comment>
<comment type="subcellular location">
    <subcellularLocation>
        <location>Plastid</location>
        <location>Chloroplast</location>
    </subcellularLocation>
</comment>
<comment type="similarity">
    <text evidence="3">Belongs to the universal ribosomal protein uS7 family.</text>
</comment>
<name>RR7_OENGL</name>
<dbReference type="EMBL" id="EU262890">
    <property type="protein sequence ID" value="ABX10082.1"/>
    <property type="molecule type" value="Genomic_DNA"/>
</dbReference>
<dbReference type="EMBL" id="EU262890">
    <property type="protein sequence ID" value="ABX10095.1"/>
    <property type="molecule type" value="Genomic_DNA"/>
</dbReference>
<dbReference type="SMR" id="B0Z589"/>
<dbReference type="GO" id="GO:0009507">
    <property type="term" value="C:chloroplast"/>
    <property type="evidence" value="ECO:0007669"/>
    <property type="project" value="UniProtKB-SubCell"/>
</dbReference>
<dbReference type="GO" id="GO:0015935">
    <property type="term" value="C:small ribosomal subunit"/>
    <property type="evidence" value="ECO:0007669"/>
    <property type="project" value="InterPro"/>
</dbReference>
<dbReference type="GO" id="GO:0019843">
    <property type="term" value="F:rRNA binding"/>
    <property type="evidence" value="ECO:0007669"/>
    <property type="project" value="UniProtKB-UniRule"/>
</dbReference>
<dbReference type="GO" id="GO:0003735">
    <property type="term" value="F:structural constituent of ribosome"/>
    <property type="evidence" value="ECO:0007669"/>
    <property type="project" value="InterPro"/>
</dbReference>
<dbReference type="GO" id="GO:0006412">
    <property type="term" value="P:translation"/>
    <property type="evidence" value="ECO:0007669"/>
    <property type="project" value="UniProtKB-UniRule"/>
</dbReference>
<dbReference type="CDD" id="cd14871">
    <property type="entry name" value="uS7_Chloroplast"/>
    <property type="match status" value="1"/>
</dbReference>
<dbReference type="FunFam" id="1.10.455.10:FF:000001">
    <property type="entry name" value="30S ribosomal protein S7"/>
    <property type="match status" value="1"/>
</dbReference>
<dbReference type="Gene3D" id="1.10.455.10">
    <property type="entry name" value="Ribosomal protein S7 domain"/>
    <property type="match status" value="1"/>
</dbReference>
<dbReference type="HAMAP" id="MF_00480_B">
    <property type="entry name" value="Ribosomal_uS7_B"/>
    <property type="match status" value="1"/>
</dbReference>
<dbReference type="InterPro" id="IPR000235">
    <property type="entry name" value="Ribosomal_uS7"/>
</dbReference>
<dbReference type="InterPro" id="IPR005717">
    <property type="entry name" value="Ribosomal_uS7_bac/org-type"/>
</dbReference>
<dbReference type="InterPro" id="IPR020606">
    <property type="entry name" value="Ribosomal_uS7_CS"/>
</dbReference>
<dbReference type="InterPro" id="IPR023798">
    <property type="entry name" value="Ribosomal_uS7_dom"/>
</dbReference>
<dbReference type="InterPro" id="IPR036823">
    <property type="entry name" value="Ribosomal_uS7_dom_sf"/>
</dbReference>
<dbReference type="NCBIfam" id="TIGR01029">
    <property type="entry name" value="rpsG_bact"/>
    <property type="match status" value="1"/>
</dbReference>
<dbReference type="PANTHER" id="PTHR11205">
    <property type="entry name" value="RIBOSOMAL PROTEIN S7"/>
    <property type="match status" value="1"/>
</dbReference>
<dbReference type="Pfam" id="PF00177">
    <property type="entry name" value="Ribosomal_S7"/>
    <property type="match status" value="1"/>
</dbReference>
<dbReference type="PIRSF" id="PIRSF002122">
    <property type="entry name" value="RPS7p_RPS7a_RPS5e_RPS7o"/>
    <property type="match status" value="1"/>
</dbReference>
<dbReference type="SUPFAM" id="SSF47973">
    <property type="entry name" value="Ribosomal protein S7"/>
    <property type="match status" value="1"/>
</dbReference>
<dbReference type="PROSITE" id="PS00052">
    <property type="entry name" value="RIBOSOMAL_S7"/>
    <property type="match status" value="1"/>
</dbReference>
<evidence type="ECO:0000250" key="1"/>
<evidence type="ECO:0000255" key="2">
    <source>
        <dbReference type="HAMAP-Rule" id="MF_00480"/>
    </source>
</evidence>
<evidence type="ECO:0000305" key="3"/>
<protein>
    <recommendedName>
        <fullName evidence="2">Small ribosomal subunit protein uS7cz/uS7cy</fullName>
    </recommendedName>
    <alternativeName>
        <fullName>30S ribosomal protein S7, chloroplastic</fullName>
    </alternativeName>
</protein>
<feature type="chain" id="PRO_0000344354" description="Small ribosomal subunit protein uS7cz/uS7cy">
    <location>
        <begin position="1"/>
        <end position="155"/>
    </location>
</feature>